<dbReference type="EC" id="2.5.1.6" evidence="1"/>
<dbReference type="EMBL" id="CP001164">
    <property type="protein sequence ID" value="ACI37582.1"/>
    <property type="molecule type" value="Genomic_DNA"/>
</dbReference>
<dbReference type="RefSeq" id="WP_001062128.1">
    <property type="nucleotide sequence ID" value="NC_011353.1"/>
</dbReference>
<dbReference type="SMR" id="B5YQD9"/>
<dbReference type="GeneID" id="93779055"/>
<dbReference type="KEGG" id="ecf:ECH74115_4244"/>
<dbReference type="HOGENOM" id="CLU_041802_1_1_6"/>
<dbReference type="UniPathway" id="UPA00315">
    <property type="reaction ID" value="UER00080"/>
</dbReference>
<dbReference type="GO" id="GO:0005737">
    <property type="term" value="C:cytoplasm"/>
    <property type="evidence" value="ECO:0007669"/>
    <property type="project" value="UniProtKB-SubCell"/>
</dbReference>
<dbReference type="GO" id="GO:0005524">
    <property type="term" value="F:ATP binding"/>
    <property type="evidence" value="ECO:0007669"/>
    <property type="project" value="UniProtKB-UniRule"/>
</dbReference>
<dbReference type="GO" id="GO:0000287">
    <property type="term" value="F:magnesium ion binding"/>
    <property type="evidence" value="ECO:0007669"/>
    <property type="project" value="UniProtKB-UniRule"/>
</dbReference>
<dbReference type="GO" id="GO:0004478">
    <property type="term" value="F:methionine adenosyltransferase activity"/>
    <property type="evidence" value="ECO:0007669"/>
    <property type="project" value="UniProtKB-UniRule"/>
</dbReference>
<dbReference type="GO" id="GO:0006730">
    <property type="term" value="P:one-carbon metabolic process"/>
    <property type="evidence" value="ECO:0007669"/>
    <property type="project" value="UniProtKB-KW"/>
</dbReference>
<dbReference type="GO" id="GO:0006556">
    <property type="term" value="P:S-adenosylmethionine biosynthetic process"/>
    <property type="evidence" value="ECO:0007669"/>
    <property type="project" value="UniProtKB-UniRule"/>
</dbReference>
<dbReference type="CDD" id="cd18079">
    <property type="entry name" value="S-AdoMet_synt"/>
    <property type="match status" value="1"/>
</dbReference>
<dbReference type="FunFam" id="3.30.300.10:FF:000001">
    <property type="entry name" value="S-adenosylmethionine synthase"/>
    <property type="match status" value="1"/>
</dbReference>
<dbReference type="FunFam" id="3.30.300.10:FF:000003">
    <property type="entry name" value="S-adenosylmethionine synthase"/>
    <property type="match status" value="1"/>
</dbReference>
<dbReference type="Gene3D" id="3.30.300.10">
    <property type="match status" value="3"/>
</dbReference>
<dbReference type="HAMAP" id="MF_00086">
    <property type="entry name" value="S_AdoMet_synth1"/>
    <property type="match status" value="1"/>
</dbReference>
<dbReference type="InterPro" id="IPR022631">
    <property type="entry name" value="ADOMET_SYNTHASE_CS"/>
</dbReference>
<dbReference type="InterPro" id="IPR022630">
    <property type="entry name" value="S-AdoMet_synt_C"/>
</dbReference>
<dbReference type="InterPro" id="IPR022629">
    <property type="entry name" value="S-AdoMet_synt_central"/>
</dbReference>
<dbReference type="InterPro" id="IPR022628">
    <property type="entry name" value="S-AdoMet_synt_N"/>
</dbReference>
<dbReference type="InterPro" id="IPR002133">
    <property type="entry name" value="S-AdoMet_synthetase"/>
</dbReference>
<dbReference type="InterPro" id="IPR022636">
    <property type="entry name" value="S-AdoMet_synthetase_sfam"/>
</dbReference>
<dbReference type="NCBIfam" id="TIGR01034">
    <property type="entry name" value="metK"/>
    <property type="match status" value="1"/>
</dbReference>
<dbReference type="PANTHER" id="PTHR11964">
    <property type="entry name" value="S-ADENOSYLMETHIONINE SYNTHETASE"/>
    <property type="match status" value="1"/>
</dbReference>
<dbReference type="Pfam" id="PF02773">
    <property type="entry name" value="S-AdoMet_synt_C"/>
    <property type="match status" value="1"/>
</dbReference>
<dbReference type="Pfam" id="PF02772">
    <property type="entry name" value="S-AdoMet_synt_M"/>
    <property type="match status" value="1"/>
</dbReference>
<dbReference type="Pfam" id="PF00438">
    <property type="entry name" value="S-AdoMet_synt_N"/>
    <property type="match status" value="1"/>
</dbReference>
<dbReference type="PIRSF" id="PIRSF000497">
    <property type="entry name" value="MAT"/>
    <property type="match status" value="1"/>
</dbReference>
<dbReference type="SUPFAM" id="SSF55973">
    <property type="entry name" value="S-adenosylmethionine synthetase"/>
    <property type="match status" value="3"/>
</dbReference>
<dbReference type="PROSITE" id="PS00376">
    <property type="entry name" value="ADOMET_SYNTHASE_1"/>
    <property type="match status" value="1"/>
</dbReference>
<dbReference type="PROSITE" id="PS00377">
    <property type="entry name" value="ADOMET_SYNTHASE_2"/>
    <property type="match status" value="1"/>
</dbReference>
<gene>
    <name evidence="1" type="primary">metK</name>
    <name type="ordered locus">ECH74115_4244</name>
</gene>
<accession>B5YQD9</accession>
<sequence length="384" mass="41952">MAKHLFTSESVSEGHPDKIADQISDAVLDAILEQDPKARVACETYVKTGMVLVGGEITTSAWVDIEEITRNTVREIGYVHSDMGFDANSCAVLSAIGKQSPDINQGVDRADPLEQGAGDQGLMFGYATNETDVLMPAPITYAHRLVQRQAEVRKNGTLPWLRPDAKSQVTFQYDDGKIVGIDAVVLSTQHSEEIDQKSLQEAVMEEIIKPILPAEWLTSATKFFINPTGRFVIGGPMGDCGLTGRKIIVDTYGGMARHGGGAFSGKDPSKVDRSAAYAARYVAKNIVAAGLADRCEIQVSYAIGVAEPTSIMVETFGTEKVPSEQLTLLVREFFDLRPYGLIQMLDLLHPIYKETAAYGHFGREHFPWEKTDKAQLLRDAAGLK</sequence>
<feature type="chain" id="PRO_1000093046" description="S-adenosylmethionine synthase">
    <location>
        <begin position="1"/>
        <end position="384"/>
    </location>
</feature>
<feature type="region of interest" description="Flexible loop" evidence="1">
    <location>
        <begin position="99"/>
        <end position="109"/>
    </location>
</feature>
<feature type="binding site" description="in other chain" evidence="1">
    <location>
        <position position="15"/>
    </location>
    <ligand>
        <name>ATP</name>
        <dbReference type="ChEBI" id="CHEBI:30616"/>
        <note>ligand shared between two neighboring subunits</note>
    </ligand>
</feature>
<feature type="binding site" evidence="1">
    <location>
        <position position="17"/>
    </location>
    <ligand>
        <name>Mg(2+)</name>
        <dbReference type="ChEBI" id="CHEBI:18420"/>
    </ligand>
</feature>
<feature type="binding site" evidence="1">
    <location>
        <position position="43"/>
    </location>
    <ligand>
        <name>K(+)</name>
        <dbReference type="ChEBI" id="CHEBI:29103"/>
    </ligand>
</feature>
<feature type="binding site" description="in other chain" evidence="1">
    <location>
        <position position="56"/>
    </location>
    <ligand>
        <name>L-methionine</name>
        <dbReference type="ChEBI" id="CHEBI:57844"/>
        <note>ligand shared between two neighboring subunits</note>
    </ligand>
</feature>
<feature type="binding site" description="in other chain" evidence="1">
    <location>
        <position position="99"/>
    </location>
    <ligand>
        <name>L-methionine</name>
        <dbReference type="ChEBI" id="CHEBI:57844"/>
        <note>ligand shared between two neighboring subunits</note>
    </ligand>
</feature>
<feature type="binding site" description="in other chain" evidence="1">
    <location>
        <begin position="164"/>
        <end position="166"/>
    </location>
    <ligand>
        <name>ATP</name>
        <dbReference type="ChEBI" id="CHEBI:30616"/>
        <note>ligand shared between two neighboring subunits</note>
    </ligand>
</feature>
<feature type="binding site" description="in other chain" evidence="1">
    <location>
        <begin position="230"/>
        <end position="231"/>
    </location>
    <ligand>
        <name>ATP</name>
        <dbReference type="ChEBI" id="CHEBI:30616"/>
        <note>ligand shared between two neighboring subunits</note>
    </ligand>
</feature>
<feature type="binding site" evidence="1">
    <location>
        <position position="239"/>
    </location>
    <ligand>
        <name>ATP</name>
        <dbReference type="ChEBI" id="CHEBI:30616"/>
        <note>ligand shared between two neighboring subunits</note>
    </ligand>
</feature>
<feature type="binding site" evidence="1">
    <location>
        <position position="239"/>
    </location>
    <ligand>
        <name>L-methionine</name>
        <dbReference type="ChEBI" id="CHEBI:57844"/>
        <note>ligand shared between two neighboring subunits</note>
    </ligand>
</feature>
<feature type="binding site" description="in other chain" evidence="1">
    <location>
        <begin position="245"/>
        <end position="246"/>
    </location>
    <ligand>
        <name>ATP</name>
        <dbReference type="ChEBI" id="CHEBI:30616"/>
        <note>ligand shared between two neighboring subunits</note>
    </ligand>
</feature>
<feature type="binding site" evidence="1">
    <location>
        <position position="262"/>
    </location>
    <ligand>
        <name>ATP</name>
        <dbReference type="ChEBI" id="CHEBI:30616"/>
        <note>ligand shared between two neighboring subunits</note>
    </ligand>
</feature>
<feature type="binding site" evidence="1">
    <location>
        <position position="266"/>
    </location>
    <ligand>
        <name>ATP</name>
        <dbReference type="ChEBI" id="CHEBI:30616"/>
        <note>ligand shared between two neighboring subunits</note>
    </ligand>
</feature>
<feature type="binding site" description="in other chain" evidence="1">
    <location>
        <position position="270"/>
    </location>
    <ligand>
        <name>L-methionine</name>
        <dbReference type="ChEBI" id="CHEBI:57844"/>
        <note>ligand shared between two neighboring subunits</note>
    </ligand>
</feature>
<keyword id="KW-0067">ATP-binding</keyword>
<keyword id="KW-0963">Cytoplasm</keyword>
<keyword id="KW-0460">Magnesium</keyword>
<keyword id="KW-0479">Metal-binding</keyword>
<keyword id="KW-0547">Nucleotide-binding</keyword>
<keyword id="KW-0554">One-carbon metabolism</keyword>
<keyword id="KW-0630">Potassium</keyword>
<keyword id="KW-0808">Transferase</keyword>
<comment type="function">
    <text evidence="1">Catalyzes the formation of S-adenosylmethionine (AdoMet) from methionine and ATP. The overall synthetic reaction is composed of two sequential steps, AdoMet formation and the subsequent tripolyphosphate hydrolysis which occurs prior to release of AdoMet from the enzyme.</text>
</comment>
<comment type="catalytic activity">
    <reaction evidence="1">
        <text>L-methionine + ATP + H2O = S-adenosyl-L-methionine + phosphate + diphosphate</text>
        <dbReference type="Rhea" id="RHEA:21080"/>
        <dbReference type="ChEBI" id="CHEBI:15377"/>
        <dbReference type="ChEBI" id="CHEBI:30616"/>
        <dbReference type="ChEBI" id="CHEBI:33019"/>
        <dbReference type="ChEBI" id="CHEBI:43474"/>
        <dbReference type="ChEBI" id="CHEBI:57844"/>
        <dbReference type="ChEBI" id="CHEBI:59789"/>
        <dbReference type="EC" id="2.5.1.6"/>
    </reaction>
</comment>
<comment type="cofactor">
    <cofactor evidence="1">
        <name>Mg(2+)</name>
        <dbReference type="ChEBI" id="CHEBI:18420"/>
    </cofactor>
    <text evidence="1">Binds 2 divalent ions per subunit.</text>
</comment>
<comment type="cofactor">
    <cofactor evidence="1">
        <name>K(+)</name>
        <dbReference type="ChEBI" id="CHEBI:29103"/>
    </cofactor>
    <text evidence="1">Binds 1 potassium ion per subunit.</text>
</comment>
<comment type="pathway">
    <text evidence="1">Amino-acid biosynthesis; S-adenosyl-L-methionine biosynthesis; S-adenosyl-L-methionine from L-methionine: step 1/1.</text>
</comment>
<comment type="subunit">
    <text evidence="1">Homotetramer; dimer of dimers.</text>
</comment>
<comment type="subcellular location">
    <subcellularLocation>
        <location evidence="1">Cytoplasm</location>
    </subcellularLocation>
</comment>
<comment type="similarity">
    <text evidence="1">Belongs to the AdoMet synthase family.</text>
</comment>
<name>METK_ECO5E</name>
<evidence type="ECO:0000255" key="1">
    <source>
        <dbReference type="HAMAP-Rule" id="MF_00086"/>
    </source>
</evidence>
<proteinExistence type="inferred from homology"/>
<organism>
    <name type="scientific">Escherichia coli O157:H7 (strain EC4115 / EHEC)</name>
    <dbReference type="NCBI Taxonomy" id="444450"/>
    <lineage>
        <taxon>Bacteria</taxon>
        <taxon>Pseudomonadati</taxon>
        <taxon>Pseudomonadota</taxon>
        <taxon>Gammaproteobacteria</taxon>
        <taxon>Enterobacterales</taxon>
        <taxon>Enterobacteriaceae</taxon>
        <taxon>Escherichia</taxon>
    </lineage>
</organism>
<protein>
    <recommendedName>
        <fullName evidence="1">S-adenosylmethionine synthase</fullName>
        <shortName evidence="1">AdoMet synthase</shortName>
        <ecNumber evidence="1">2.5.1.6</ecNumber>
    </recommendedName>
    <alternativeName>
        <fullName evidence="1">MAT</fullName>
    </alternativeName>
    <alternativeName>
        <fullName evidence="1">Methionine adenosyltransferase</fullName>
    </alternativeName>
</protein>
<reference key="1">
    <citation type="journal article" date="2011" name="Proc. Natl. Acad. Sci. U.S.A.">
        <title>Genomic anatomy of Escherichia coli O157:H7 outbreaks.</title>
        <authorList>
            <person name="Eppinger M."/>
            <person name="Mammel M.K."/>
            <person name="Leclerc J.E."/>
            <person name="Ravel J."/>
            <person name="Cebula T.A."/>
        </authorList>
    </citation>
    <scope>NUCLEOTIDE SEQUENCE [LARGE SCALE GENOMIC DNA]</scope>
    <source>
        <strain>EC4115 / EHEC</strain>
    </source>
</reference>